<evidence type="ECO:0000255" key="1">
    <source>
        <dbReference type="HAMAP-Rule" id="MF_00181"/>
    </source>
</evidence>
<sequence>MDIRTTTTTATDWAGDLLALGFFEDQVELSGSLAELDQKLDGILQELIAETEFKGKAGKSAIARISSKSPIRKIMILGLGKAEDFKLDTLRRTAATIARSAKKEKGKTLGISLPLWNNDPTSTTQAIAEGIELALHQDHRFKSNSEDNNDNHAPEQIQLLGLGDQTTAIERAQRICSGVILARELVAAPANVVTPVTLAETARDLAQEYGLDVEVLGQAECEALGMGAFLGVALASDLPPQFIHLTYRPSGTPRRKLAIIGKGLTFDSGGLNLKTGGSGIETMKMDMAGSAATLGAAKVVGQLKPDVEVHFIVAATENMISGRAMHPGDILTASNGKTIEVNNTDAEGRLTLADALVFAEKLGVDALVDLATLTGACIVALGDDIAGLWSSDDALAEQILQAADHSGEKLWRMPMEEKYFEGMKSQIADMKNTGPRAGGSITAALFLKQFVKETPWAHLDVAGPVWADKENGYNNAGATGYGVRTLVNWVLGS</sequence>
<protein>
    <recommendedName>
        <fullName evidence="1">Probable cytosol aminopeptidase</fullName>
        <ecNumber evidence="1">3.4.11.1</ecNumber>
    </recommendedName>
    <alternativeName>
        <fullName evidence="1">Leucine aminopeptidase</fullName>
        <shortName evidence="1">LAP</shortName>
        <ecNumber evidence="1">3.4.11.10</ecNumber>
    </alternativeName>
    <alternativeName>
        <fullName evidence="1">Leucyl aminopeptidase</fullName>
    </alternativeName>
</protein>
<name>AMPA_CYAP4</name>
<feature type="chain" id="PRO_1000192709" description="Probable cytosol aminopeptidase">
    <location>
        <begin position="1"/>
        <end position="493"/>
    </location>
</feature>
<feature type="active site" evidence="1">
    <location>
        <position position="274"/>
    </location>
</feature>
<feature type="active site" evidence="1">
    <location>
        <position position="349"/>
    </location>
</feature>
<feature type="binding site" evidence="1">
    <location>
        <position position="262"/>
    </location>
    <ligand>
        <name>Mn(2+)</name>
        <dbReference type="ChEBI" id="CHEBI:29035"/>
        <label>2</label>
    </ligand>
</feature>
<feature type="binding site" evidence="1">
    <location>
        <position position="267"/>
    </location>
    <ligand>
        <name>Mn(2+)</name>
        <dbReference type="ChEBI" id="CHEBI:29035"/>
        <label>1</label>
    </ligand>
</feature>
<feature type="binding site" evidence="1">
    <location>
        <position position="267"/>
    </location>
    <ligand>
        <name>Mn(2+)</name>
        <dbReference type="ChEBI" id="CHEBI:29035"/>
        <label>2</label>
    </ligand>
</feature>
<feature type="binding site" evidence="1">
    <location>
        <position position="286"/>
    </location>
    <ligand>
        <name>Mn(2+)</name>
        <dbReference type="ChEBI" id="CHEBI:29035"/>
        <label>2</label>
    </ligand>
</feature>
<feature type="binding site" evidence="1">
    <location>
        <position position="345"/>
    </location>
    <ligand>
        <name>Mn(2+)</name>
        <dbReference type="ChEBI" id="CHEBI:29035"/>
        <label>1</label>
    </ligand>
</feature>
<feature type="binding site" evidence="1">
    <location>
        <position position="347"/>
    </location>
    <ligand>
        <name>Mn(2+)</name>
        <dbReference type="ChEBI" id="CHEBI:29035"/>
        <label>1</label>
    </ligand>
</feature>
<feature type="binding site" evidence="1">
    <location>
        <position position="347"/>
    </location>
    <ligand>
        <name>Mn(2+)</name>
        <dbReference type="ChEBI" id="CHEBI:29035"/>
        <label>2</label>
    </ligand>
</feature>
<organism>
    <name type="scientific">Cyanothece sp. (strain PCC 7425 / ATCC 29141)</name>
    <dbReference type="NCBI Taxonomy" id="395961"/>
    <lineage>
        <taxon>Bacteria</taxon>
        <taxon>Bacillati</taxon>
        <taxon>Cyanobacteriota</taxon>
        <taxon>Cyanophyceae</taxon>
        <taxon>Gomontiellales</taxon>
        <taxon>Cyanothecaceae</taxon>
        <taxon>Cyanothece</taxon>
    </lineage>
</organism>
<keyword id="KW-0031">Aminopeptidase</keyword>
<keyword id="KW-0963">Cytoplasm</keyword>
<keyword id="KW-0378">Hydrolase</keyword>
<keyword id="KW-0464">Manganese</keyword>
<keyword id="KW-0479">Metal-binding</keyword>
<keyword id="KW-0645">Protease</keyword>
<gene>
    <name evidence="1" type="primary">pepA</name>
    <name type="ordered locus">Cyan7425_3765</name>
</gene>
<reference key="1">
    <citation type="journal article" date="2011" name="MBio">
        <title>Novel metabolic attributes of the genus Cyanothece, comprising a group of unicellular nitrogen-fixing Cyanobacteria.</title>
        <authorList>
            <person name="Bandyopadhyay A."/>
            <person name="Elvitigala T."/>
            <person name="Welsh E."/>
            <person name="Stockel J."/>
            <person name="Liberton M."/>
            <person name="Min H."/>
            <person name="Sherman L.A."/>
            <person name="Pakrasi H.B."/>
        </authorList>
    </citation>
    <scope>NUCLEOTIDE SEQUENCE [LARGE SCALE GENOMIC DNA]</scope>
    <source>
        <strain>PCC 7425 / ATCC 29141</strain>
    </source>
</reference>
<accession>B8HTK3</accession>
<dbReference type="EC" id="3.4.11.1" evidence="1"/>
<dbReference type="EC" id="3.4.11.10" evidence="1"/>
<dbReference type="EMBL" id="CP001344">
    <property type="protein sequence ID" value="ACL46084.1"/>
    <property type="molecule type" value="Genomic_DNA"/>
</dbReference>
<dbReference type="SMR" id="B8HTK3"/>
<dbReference type="STRING" id="395961.Cyan7425_3765"/>
<dbReference type="KEGG" id="cyn:Cyan7425_3765"/>
<dbReference type="eggNOG" id="COG0260">
    <property type="taxonomic scope" value="Bacteria"/>
</dbReference>
<dbReference type="HOGENOM" id="CLU_013734_5_1_3"/>
<dbReference type="OrthoDB" id="9809354at2"/>
<dbReference type="GO" id="GO:0005737">
    <property type="term" value="C:cytoplasm"/>
    <property type="evidence" value="ECO:0007669"/>
    <property type="project" value="UniProtKB-SubCell"/>
</dbReference>
<dbReference type="GO" id="GO:0030145">
    <property type="term" value="F:manganese ion binding"/>
    <property type="evidence" value="ECO:0007669"/>
    <property type="project" value="UniProtKB-UniRule"/>
</dbReference>
<dbReference type="GO" id="GO:0070006">
    <property type="term" value="F:metalloaminopeptidase activity"/>
    <property type="evidence" value="ECO:0007669"/>
    <property type="project" value="InterPro"/>
</dbReference>
<dbReference type="GO" id="GO:0006508">
    <property type="term" value="P:proteolysis"/>
    <property type="evidence" value="ECO:0007669"/>
    <property type="project" value="UniProtKB-KW"/>
</dbReference>
<dbReference type="CDD" id="cd00433">
    <property type="entry name" value="Peptidase_M17"/>
    <property type="match status" value="1"/>
</dbReference>
<dbReference type="Gene3D" id="3.40.220.10">
    <property type="entry name" value="Leucine Aminopeptidase, subunit E, domain 1"/>
    <property type="match status" value="1"/>
</dbReference>
<dbReference type="Gene3D" id="3.40.630.10">
    <property type="entry name" value="Zn peptidases"/>
    <property type="match status" value="1"/>
</dbReference>
<dbReference type="HAMAP" id="MF_00181">
    <property type="entry name" value="Cytosol_peptidase_M17"/>
    <property type="match status" value="1"/>
</dbReference>
<dbReference type="InterPro" id="IPR011356">
    <property type="entry name" value="Leucine_aapep/pepB"/>
</dbReference>
<dbReference type="InterPro" id="IPR043472">
    <property type="entry name" value="Macro_dom-like"/>
</dbReference>
<dbReference type="InterPro" id="IPR000819">
    <property type="entry name" value="Peptidase_M17_C"/>
</dbReference>
<dbReference type="InterPro" id="IPR023042">
    <property type="entry name" value="Peptidase_M17_leu_NH2_pept"/>
</dbReference>
<dbReference type="InterPro" id="IPR008283">
    <property type="entry name" value="Peptidase_M17_N"/>
</dbReference>
<dbReference type="NCBIfam" id="NF002073">
    <property type="entry name" value="PRK00913.1-2"/>
    <property type="match status" value="1"/>
</dbReference>
<dbReference type="NCBIfam" id="NF002074">
    <property type="entry name" value="PRK00913.1-4"/>
    <property type="match status" value="1"/>
</dbReference>
<dbReference type="NCBIfam" id="NF002076">
    <property type="entry name" value="PRK00913.2-3"/>
    <property type="match status" value="1"/>
</dbReference>
<dbReference type="NCBIfam" id="NF002083">
    <property type="entry name" value="PRK00913.3-5"/>
    <property type="match status" value="1"/>
</dbReference>
<dbReference type="PANTHER" id="PTHR11963:SF23">
    <property type="entry name" value="CYTOSOL AMINOPEPTIDASE"/>
    <property type="match status" value="1"/>
</dbReference>
<dbReference type="PANTHER" id="PTHR11963">
    <property type="entry name" value="LEUCINE AMINOPEPTIDASE-RELATED"/>
    <property type="match status" value="1"/>
</dbReference>
<dbReference type="Pfam" id="PF00883">
    <property type="entry name" value="Peptidase_M17"/>
    <property type="match status" value="1"/>
</dbReference>
<dbReference type="Pfam" id="PF02789">
    <property type="entry name" value="Peptidase_M17_N"/>
    <property type="match status" value="1"/>
</dbReference>
<dbReference type="PRINTS" id="PR00481">
    <property type="entry name" value="LAMNOPPTDASE"/>
</dbReference>
<dbReference type="SUPFAM" id="SSF52949">
    <property type="entry name" value="Macro domain-like"/>
    <property type="match status" value="1"/>
</dbReference>
<dbReference type="SUPFAM" id="SSF53187">
    <property type="entry name" value="Zn-dependent exopeptidases"/>
    <property type="match status" value="1"/>
</dbReference>
<dbReference type="PROSITE" id="PS00631">
    <property type="entry name" value="CYTOSOL_AP"/>
    <property type="match status" value="1"/>
</dbReference>
<proteinExistence type="inferred from homology"/>
<comment type="function">
    <text evidence="1">Presumably involved in the processing and regular turnover of intracellular proteins. Catalyzes the removal of unsubstituted N-terminal amino acids from various peptides.</text>
</comment>
<comment type="catalytic activity">
    <reaction evidence="1">
        <text>Release of an N-terminal amino acid, Xaa-|-Yaa-, in which Xaa is preferably Leu, but may be other amino acids including Pro although not Arg or Lys, and Yaa may be Pro. Amino acid amides and methyl esters are also readily hydrolyzed, but rates on arylamides are exceedingly low.</text>
        <dbReference type="EC" id="3.4.11.1"/>
    </reaction>
</comment>
<comment type="catalytic activity">
    <reaction evidence="1">
        <text>Release of an N-terminal amino acid, preferentially leucine, but not glutamic or aspartic acids.</text>
        <dbReference type="EC" id="3.4.11.10"/>
    </reaction>
</comment>
<comment type="cofactor">
    <cofactor evidence="1">
        <name>Mn(2+)</name>
        <dbReference type="ChEBI" id="CHEBI:29035"/>
    </cofactor>
    <text evidence="1">Binds 2 manganese ions per subunit.</text>
</comment>
<comment type="subcellular location">
    <subcellularLocation>
        <location evidence="1">Cytoplasm</location>
    </subcellularLocation>
</comment>
<comment type="similarity">
    <text evidence="1">Belongs to the peptidase M17 family.</text>
</comment>